<proteinExistence type="evidence at protein level"/>
<accession>Q3KRA6</accession>
<accession>B7ZLS8</accession>
<accession>Q4VC35</accession>
<protein>
    <recommendedName>
        <fullName>UPF0538 protein C2orf76</fullName>
    </recommendedName>
</protein>
<keyword id="KW-1267">Proteomics identification</keyword>
<keyword id="KW-1185">Reference proteome</keyword>
<dbReference type="EMBL" id="AC016736">
    <property type="status" value="NOT_ANNOTATED_CDS"/>
    <property type="molecule type" value="Genomic_DNA"/>
</dbReference>
<dbReference type="EMBL" id="CH471103">
    <property type="protein sequence ID" value="EAW95213.1"/>
    <property type="molecule type" value="Genomic_DNA"/>
</dbReference>
<dbReference type="EMBL" id="BC047365">
    <property type="protein sequence ID" value="AAH47365.1"/>
    <property type="molecule type" value="mRNA"/>
</dbReference>
<dbReference type="EMBL" id="BC105805">
    <property type="protein sequence ID" value="AAI05806.1"/>
    <property type="molecule type" value="mRNA"/>
</dbReference>
<dbReference type="EMBL" id="BC126395">
    <property type="protein sequence ID" value="AAI26396.1"/>
    <property type="molecule type" value="mRNA"/>
</dbReference>
<dbReference type="EMBL" id="BC126397">
    <property type="protein sequence ID" value="AAI26398.1"/>
    <property type="molecule type" value="mRNA"/>
</dbReference>
<dbReference type="EMBL" id="BC144012">
    <property type="protein sequence ID" value="AAI44013.1"/>
    <property type="molecule type" value="mRNA"/>
</dbReference>
<dbReference type="EMBL" id="BC171737">
    <property type="protein sequence ID" value="AAI71737.1"/>
    <property type="molecule type" value="mRNA"/>
</dbReference>
<dbReference type="CCDS" id="CCDS42739.1"/>
<dbReference type="RefSeq" id="NP_001017927.2">
    <property type="nucleotide sequence ID" value="NM_001017927.4"/>
</dbReference>
<dbReference type="RefSeq" id="NP_001309258.1">
    <property type="nucleotide sequence ID" value="NM_001322329.2"/>
</dbReference>
<dbReference type="RefSeq" id="NP_001309259.1">
    <property type="nucleotide sequence ID" value="NM_001322330.2"/>
</dbReference>
<dbReference type="RefSeq" id="NP_001309260.1">
    <property type="nucleotide sequence ID" value="NM_001322331.2"/>
</dbReference>
<dbReference type="BioGRID" id="126230">
    <property type="interactions" value="5"/>
</dbReference>
<dbReference type="FunCoup" id="Q3KRA6">
    <property type="interactions" value="415"/>
</dbReference>
<dbReference type="IntAct" id="Q3KRA6">
    <property type="interactions" value="1"/>
</dbReference>
<dbReference type="STRING" id="9606.ENSP00000386302"/>
<dbReference type="iPTMnet" id="Q3KRA6"/>
<dbReference type="PhosphoSitePlus" id="Q3KRA6"/>
<dbReference type="BioMuta" id="C2orf76"/>
<dbReference type="DMDM" id="313104243"/>
<dbReference type="jPOST" id="Q3KRA6"/>
<dbReference type="MassIVE" id="Q3KRA6"/>
<dbReference type="PaxDb" id="9606-ENSP00000386302"/>
<dbReference type="PeptideAtlas" id="Q3KRA6"/>
<dbReference type="ProteomicsDB" id="61740"/>
<dbReference type="Pumba" id="Q3KRA6"/>
<dbReference type="Antibodypedia" id="47996">
    <property type="antibodies" value="54 antibodies from 11 providers"/>
</dbReference>
<dbReference type="DNASU" id="130355"/>
<dbReference type="Ensembl" id="ENST00000334816.12">
    <property type="protein sequence ID" value="ENSP00000335041.7"/>
    <property type="gene ID" value="ENSG00000186132.15"/>
</dbReference>
<dbReference type="Ensembl" id="ENST00000409466.6">
    <property type="protein sequence ID" value="ENSP00000386302.2"/>
    <property type="gene ID" value="ENSG00000186132.15"/>
</dbReference>
<dbReference type="Ensembl" id="ENST00000409523.1">
    <property type="protein sequence ID" value="ENSP00000386714.1"/>
    <property type="gene ID" value="ENSG00000186132.15"/>
</dbReference>
<dbReference type="Ensembl" id="ENST00000409877.5">
    <property type="protein sequence ID" value="ENSP00000387234.1"/>
    <property type="gene ID" value="ENSG00000186132.15"/>
</dbReference>
<dbReference type="GeneID" id="130355"/>
<dbReference type="KEGG" id="hsa:130355"/>
<dbReference type="MANE-Select" id="ENST00000334816.12">
    <property type="protein sequence ID" value="ENSP00000335041.7"/>
    <property type="RefSeq nucleotide sequence ID" value="NM_001322331.2"/>
    <property type="RefSeq protein sequence ID" value="NP_001309260.1"/>
</dbReference>
<dbReference type="UCSC" id="uc002tls.2">
    <property type="organism name" value="human"/>
</dbReference>
<dbReference type="AGR" id="HGNC:27017"/>
<dbReference type="CTD" id="130355"/>
<dbReference type="DisGeNET" id="130355"/>
<dbReference type="GeneCards" id="C2orf76"/>
<dbReference type="HGNC" id="HGNC:27017">
    <property type="gene designation" value="C2orf76"/>
</dbReference>
<dbReference type="HPA" id="ENSG00000186132">
    <property type="expression patterns" value="Low tissue specificity"/>
</dbReference>
<dbReference type="neXtProt" id="NX_Q3KRA6"/>
<dbReference type="OpenTargets" id="ENSG00000186132"/>
<dbReference type="PharmGKB" id="PA162379558"/>
<dbReference type="VEuPathDB" id="HostDB:ENSG00000186132"/>
<dbReference type="eggNOG" id="KOG4147">
    <property type="taxonomic scope" value="Eukaryota"/>
</dbReference>
<dbReference type="GeneTree" id="ENSGT00390000015352"/>
<dbReference type="HOGENOM" id="CLU_117792_1_0_1"/>
<dbReference type="InParanoid" id="Q3KRA6"/>
<dbReference type="OMA" id="YRNVKNH"/>
<dbReference type="OrthoDB" id="937at2759"/>
<dbReference type="PAN-GO" id="Q3KRA6">
    <property type="GO annotations" value="0 GO annotations based on evolutionary models"/>
</dbReference>
<dbReference type="PhylomeDB" id="Q3KRA6"/>
<dbReference type="TreeFam" id="TF300221"/>
<dbReference type="PathwayCommons" id="Q3KRA6"/>
<dbReference type="SignaLink" id="Q3KRA6"/>
<dbReference type="BioGRID-ORCS" id="130355">
    <property type="hits" value="48 hits in 1096 CRISPR screens"/>
</dbReference>
<dbReference type="ChiTaRS" id="C2orf76">
    <property type="organism name" value="human"/>
</dbReference>
<dbReference type="GenomeRNAi" id="130355"/>
<dbReference type="Pharos" id="Q3KRA6">
    <property type="development level" value="Tdark"/>
</dbReference>
<dbReference type="PRO" id="PR:Q3KRA6"/>
<dbReference type="Proteomes" id="UP000005640">
    <property type="component" value="Chromosome 2"/>
</dbReference>
<dbReference type="RNAct" id="Q3KRA6">
    <property type="molecule type" value="protein"/>
</dbReference>
<dbReference type="Bgee" id="ENSG00000186132">
    <property type="expression patterns" value="Expressed in islet of Langerhans and 169 other cell types or tissues"/>
</dbReference>
<dbReference type="ExpressionAtlas" id="Q3KRA6">
    <property type="expression patterns" value="baseline and differential"/>
</dbReference>
<dbReference type="InterPro" id="IPR018794">
    <property type="entry name" value="UPF0538"/>
</dbReference>
<dbReference type="PANTHER" id="PTHR18444">
    <property type="entry name" value="UPF0538 FAMILY MEMBER"/>
    <property type="match status" value="1"/>
</dbReference>
<dbReference type="PANTHER" id="PTHR18444:SF9">
    <property type="entry name" value="UPF0538 PROTEIN C2ORF76"/>
    <property type="match status" value="1"/>
</dbReference>
<dbReference type="Pfam" id="PF10209">
    <property type="entry name" value="DUF2340"/>
    <property type="match status" value="1"/>
</dbReference>
<organism>
    <name type="scientific">Homo sapiens</name>
    <name type="common">Human</name>
    <dbReference type="NCBI Taxonomy" id="9606"/>
    <lineage>
        <taxon>Eukaryota</taxon>
        <taxon>Metazoa</taxon>
        <taxon>Chordata</taxon>
        <taxon>Craniata</taxon>
        <taxon>Vertebrata</taxon>
        <taxon>Euteleostomi</taxon>
        <taxon>Mammalia</taxon>
        <taxon>Eutheria</taxon>
        <taxon>Euarchontoglires</taxon>
        <taxon>Primates</taxon>
        <taxon>Haplorrhini</taxon>
        <taxon>Catarrhini</taxon>
        <taxon>Hominidae</taxon>
        <taxon>Homo</taxon>
    </lineage>
</organism>
<gene>
    <name type="primary">C2orf76</name>
</gene>
<feature type="chain" id="PRO_0000325824" description="UPF0538 protein C2orf76">
    <location>
        <begin position="1"/>
        <end position="126"/>
    </location>
</feature>
<feature type="sequence variant" id="VAR_039931" description="In dbSNP:rs1132267." evidence="1 2">
    <original>I</original>
    <variation>V</variation>
    <location>
        <position position="46"/>
    </location>
</feature>
<feature type="sequence variant" id="VAR_039932" description="In dbSNP:rs1052500." evidence="1 2">
    <original>K</original>
    <variation>R</variation>
    <location>
        <position position="116"/>
    </location>
</feature>
<evidence type="ECO:0000269" key="1">
    <source>
    </source>
</evidence>
<evidence type="ECO:0000269" key="2">
    <source ref="2"/>
</evidence>
<evidence type="ECO:0000305" key="3"/>
<sequence length="126" mass="14609">MAPGEVTITVRLIRSFEHRNFKPVVYHGVNLDQTVKEFIVFLKQDIPLRTNLPPPFRNYKYDALKIIHQAHKSKTNELVLSLEDDERLLLKEDSTLKAAGIASETEIAFFCEEDYKNYKANPISSW</sequence>
<reference key="1">
    <citation type="journal article" date="2005" name="Nature">
        <title>Generation and annotation of the DNA sequences of human chromosomes 2 and 4.</title>
        <authorList>
            <person name="Hillier L.W."/>
            <person name="Graves T.A."/>
            <person name="Fulton R.S."/>
            <person name="Fulton L.A."/>
            <person name="Pepin K.H."/>
            <person name="Minx P."/>
            <person name="Wagner-McPherson C."/>
            <person name="Layman D."/>
            <person name="Wylie K."/>
            <person name="Sekhon M."/>
            <person name="Becker M.C."/>
            <person name="Fewell G.A."/>
            <person name="Delehaunty K.D."/>
            <person name="Miner T.L."/>
            <person name="Nash W.E."/>
            <person name="Kremitzki C."/>
            <person name="Oddy L."/>
            <person name="Du H."/>
            <person name="Sun H."/>
            <person name="Bradshaw-Cordum H."/>
            <person name="Ali J."/>
            <person name="Carter J."/>
            <person name="Cordes M."/>
            <person name="Harris A."/>
            <person name="Isak A."/>
            <person name="van Brunt A."/>
            <person name="Nguyen C."/>
            <person name="Du F."/>
            <person name="Courtney L."/>
            <person name="Kalicki J."/>
            <person name="Ozersky P."/>
            <person name="Abbott S."/>
            <person name="Armstrong J."/>
            <person name="Belter E.A."/>
            <person name="Caruso L."/>
            <person name="Cedroni M."/>
            <person name="Cotton M."/>
            <person name="Davidson T."/>
            <person name="Desai A."/>
            <person name="Elliott G."/>
            <person name="Erb T."/>
            <person name="Fronick C."/>
            <person name="Gaige T."/>
            <person name="Haakenson W."/>
            <person name="Haglund K."/>
            <person name="Holmes A."/>
            <person name="Harkins R."/>
            <person name="Kim K."/>
            <person name="Kruchowski S.S."/>
            <person name="Strong C.M."/>
            <person name="Grewal N."/>
            <person name="Goyea E."/>
            <person name="Hou S."/>
            <person name="Levy A."/>
            <person name="Martinka S."/>
            <person name="Mead K."/>
            <person name="McLellan M.D."/>
            <person name="Meyer R."/>
            <person name="Randall-Maher J."/>
            <person name="Tomlinson C."/>
            <person name="Dauphin-Kohlberg S."/>
            <person name="Kozlowicz-Reilly A."/>
            <person name="Shah N."/>
            <person name="Swearengen-Shahid S."/>
            <person name="Snider J."/>
            <person name="Strong J.T."/>
            <person name="Thompson J."/>
            <person name="Yoakum M."/>
            <person name="Leonard S."/>
            <person name="Pearman C."/>
            <person name="Trani L."/>
            <person name="Radionenko M."/>
            <person name="Waligorski J.E."/>
            <person name="Wang C."/>
            <person name="Rock S.M."/>
            <person name="Tin-Wollam A.-M."/>
            <person name="Maupin R."/>
            <person name="Latreille P."/>
            <person name="Wendl M.C."/>
            <person name="Yang S.-P."/>
            <person name="Pohl C."/>
            <person name="Wallis J.W."/>
            <person name="Spieth J."/>
            <person name="Bieri T.A."/>
            <person name="Berkowicz N."/>
            <person name="Nelson J.O."/>
            <person name="Osborne J."/>
            <person name="Ding L."/>
            <person name="Meyer R."/>
            <person name="Sabo A."/>
            <person name="Shotland Y."/>
            <person name="Sinha P."/>
            <person name="Wohldmann P.E."/>
            <person name="Cook L.L."/>
            <person name="Hickenbotham M.T."/>
            <person name="Eldred J."/>
            <person name="Williams D."/>
            <person name="Jones T.A."/>
            <person name="She X."/>
            <person name="Ciccarelli F.D."/>
            <person name="Izaurralde E."/>
            <person name="Taylor J."/>
            <person name="Schmutz J."/>
            <person name="Myers R.M."/>
            <person name="Cox D.R."/>
            <person name="Huang X."/>
            <person name="McPherson J.D."/>
            <person name="Mardis E.R."/>
            <person name="Clifton S.W."/>
            <person name="Warren W.C."/>
            <person name="Chinwalla A.T."/>
            <person name="Eddy S.R."/>
            <person name="Marra M.A."/>
            <person name="Ovcharenko I."/>
            <person name="Furey T.S."/>
            <person name="Miller W."/>
            <person name="Eichler E.E."/>
            <person name="Bork P."/>
            <person name="Suyama M."/>
            <person name="Torrents D."/>
            <person name="Waterston R.H."/>
            <person name="Wilson R.K."/>
        </authorList>
    </citation>
    <scope>NUCLEOTIDE SEQUENCE [LARGE SCALE GENOMIC DNA]</scope>
</reference>
<reference key="2">
    <citation type="submission" date="2005-07" db="EMBL/GenBank/DDBJ databases">
        <authorList>
            <person name="Mural R.J."/>
            <person name="Istrail S."/>
            <person name="Sutton G.G."/>
            <person name="Florea L."/>
            <person name="Halpern A.L."/>
            <person name="Mobarry C.M."/>
            <person name="Lippert R."/>
            <person name="Walenz B."/>
            <person name="Shatkay H."/>
            <person name="Dew I."/>
            <person name="Miller J.R."/>
            <person name="Flanigan M.J."/>
            <person name="Edwards N.J."/>
            <person name="Bolanos R."/>
            <person name="Fasulo D."/>
            <person name="Halldorsson B.V."/>
            <person name="Hannenhalli S."/>
            <person name="Turner R."/>
            <person name="Yooseph S."/>
            <person name="Lu F."/>
            <person name="Nusskern D.R."/>
            <person name="Shue B.C."/>
            <person name="Zheng X.H."/>
            <person name="Zhong F."/>
            <person name="Delcher A.L."/>
            <person name="Huson D.H."/>
            <person name="Kravitz S.A."/>
            <person name="Mouchard L."/>
            <person name="Reinert K."/>
            <person name="Remington K.A."/>
            <person name="Clark A.G."/>
            <person name="Waterman M.S."/>
            <person name="Eichler E.E."/>
            <person name="Adams M.D."/>
            <person name="Hunkapiller M.W."/>
            <person name="Myers E.W."/>
            <person name="Venter J.C."/>
        </authorList>
    </citation>
    <scope>NUCLEOTIDE SEQUENCE [LARGE SCALE GENOMIC DNA]</scope>
    <scope>VARIANTS VAL-46 AND ARG-116</scope>
</reference>
<reference key="3">
    <citation type="journal article" date="2004" name="Genome Res.">
        <title>The status, quality, and expansion of the NIH full-length cDNA project: the Mammalian Gene Collection (MGC).</title>
        <authorList>
            <consortium name="The MGC Project Team"/>
        </authorList>
    </citation>
    <scope>NUCLEOTIDE SEQUENCE [LARGE SCALE MRNA]</scope>
    <scope>VARIANTS VAL-46 AND ARG-116</scope>
    <source>
        <tissue>Colon</tissue>
        <tissue>Testis</tissue>
    </source>
</reference>
<reference key="4">
    <citation type="journal article" date="2011" name="BMC Syst. Biol.">
        <title>Initial characterization of the human central proteome.</title>
        <authorList>
            <person name="Burkard T.R."/>
            <person name="Planyavsky M."/>
            <person name="Kaupe I."/>
            <person name="Breitwieser F.P."/>
            <person name="Buerckstuemmer T."/>
            <person name="Bennett K.L."/>
            <person name="Superti-Furga G."/>
            <person name="Colinge J."/>
        </authorList>
    </citation>
    <scope>IDENTIFICATION BY MASS SPECTROMETRY [LARGE SCALE ANALYSIS]</scope>
</reference>
<reference key="5">
    <citation type="journal article" date="2012" name="Proc. Natl. Acad. Sci. U.S.A.">
        <title>N-terminal acetylome analyses and functional insights of the N-terminal acetyltransferase NatB.</title>
        <authorList>
            <person name="Van Damme P."/>
            <person name="Lasa M."/>
            <person name="Polevoda B."/>
            <person name="Gazquez C."/>
            <person name="Elosegui-Artola A."/>
            <person name="Kim D.S."/>
            <person name="De Juan-Pardo E."/>
            <person name="Demeyer K."/>
            <person name="Hole K."/>
            <person name="Larrea E."/>
            <person name="Timmerman E."/>
            <person name="Prieto J."/>
            <person name="Arnesen T."/>
            <person name="Sherman F."/>
            <person name="Gevaert K."/>
            <person name="Aldabe R."/>
        </authorList>
    </citation>
    <scope>IDENTIFICATION BY MASS SPECTROMETRY [LARGE SCALE ANALYSIS]</scope>
</reference>
<comment type="interaction">
    <interactant intactId="EBI-12161461">
        <id>Q3KRA6</id>
    </interactant>
    <interactant intactId="EBI-16439278">
        <id>Q6FHY5</id>
        <label>MEOX2</label>
    </interactant>
    <organismsDiffer>false</organismsDiffer>
    <experiments>3</experiments>
</comment>
<comment type="similarity">
    <text evidence="3">Belongs to the UPF0538 family.</text>
</comment>
<name>CB076_HUMAN</name>